<accession>B2J393</accession>
<reference key="1">
    <citation type="journal article" date="2013" name="Plant Physiol.">
        <title>A Nostoc punctiforme Sugar Transporter Necessary to Establish a Cyanobacterium-Plant Symbiosis.</title>
        <authorList>
            <person name="Ekman M."/>
            <person name="Picossi S."/>
            <person name="Campbell E.L."/>
            <person name="Meeks J.C."/>
            <person name="Flores E."/>
        </authorList>
    </citation>
    <scope>NUCLEOTIDE SEQUENCE [LARGE SCALE GENOMIC DNA]</scope>
    <source>
        <strain>ATCC 29133 / PCC 73102</strain>
    </source>
</reference>
<gene>
    <name evidence="1" type="primary">psaC</name>
    <name type="ordered locus">Npun_F5213</name>
</gene>
<organism>
    <name type="scientific">Nostoc punctiforme (strain ATCC 29133 / PCC 73102)</name>
    <dbReference type="NCBI Taxonomy" id="63737"/>
    <lineage>
        <taxon>Bacteria</taxon>
        <taxon>Bacillati</taxon>
        <taxon>Cyanobacteriota</taxon>
        <taxon>Cyanophyceae</taxon>
        <taxon>Nostocales</taxon>
        <taxon>Nostocaceae</taxon>
        <taxon>Nostoc</taxon>
    </lineage>
</organism>
<comment type="function">
    <text evidence="1">Apoprotein for the two 4Fe-4S centers FA and FB of photosystem I (PSI); essential for photochemical activity. FB is the terminal electron acceptor of PSI, donating electrons to ferredoxin. The C-terminus interacts with PsaA/B/D and helps assemble the protein into the PSI complex. Required for binding of PsaD and PsaE to PSI. PSI is a plastocyanin/cytochrome c6-ferredoxin oxidoreductase, converting photonic excitation into a charge separation, which transfers an electron from the donor P700 chlorophyll pair to the spectroscopically characterized acceptors A0, A1, FX, FA and FB in turn.</text>
</comment>
<comment type="catalytic activity">
    <reaction evidence="1">
        <text>reduced [plastocyanin] + hnu + oxidized [2Fe-2S]-[ferredoxin] = oxidized [plastocyanin] + reduced [2Fe-2S]-[ferredoxin]</text>
        <dbReference type="Rhea" id="RHEA:30407"/>
        <dbReference type="Rhea" id="RHEA-COMP:10000"/>
        <dbReference type="Rhea" id="RHEA-COMP:10001"/>
        <dbReference type="Rhea" id="RHEA-COMP:10039"/>
        <dbReference type="Rhea" id="RHEA-COMP:10040"/>
        <dbReference type="ChEBI" id="CHEBI:29036"/>
        <dbReference type="ChEBI" id="CHEBI:30212"/>
        <dbReference type="ChEBI" id="CHEBI:33737"/>
        <dbReference type="ChEBI" id="CHEBI:33738"/>
        <dbReference type="ChEBI" id="CHEBI:49552"/>
        <dbReference type="EC" id="1.97.1.12"/>
    </reaction>
</comment>
<comment type="cofactor">
    <cofactor evidence="1">
        <name>[4Fe-4S] cluster</name>
        <dbReference type="ChEBI" id="CHEBI:49883"/>
    </cofactor>
    <text evidence="1">Binds 2 [4Fe-4S] clusters. Cluster 2 is most probably the spectroscopically characterized electron acceptor FA and cluster 1 is most probably FB.</text>
</comment>
<comment type="subunit">
    <text evidence="1">The cyanobacterial PSI reaction center is composed of one copy each of PsaA,B,C,D,E,F,I,J,K,L,M and X, and forms trimeric complexes.</text>
</comment>
<comment type="subcellular location">
    <subcellularLocation>
        <location evidence="1">Cellular thylakoid membrane</location>
        <topology evidence="1">Peripheral membrane protein</topology>
        <orientation evidence="1">Cytoplasmic side</orientation>
    </subcellularLocation>
</comment>
<evidence type="ECO:0000255" key="1">
    <source>
        <dbReference type="HAMAP-Rule" id="MF_01303"/>
    </source>
</evidence>
<proteinExistence type="inferred from homology"/>
<dbReference type="EC" id="1.97.1.12" evidence="1"/>
<dbReference type="EMBL" id="CP001037">
    <property type="protein sequence ID" value="ACC83543.1"/>
    <property type="molecule type" value="Genomic_DNA"/>
</dbReference>
<dbReference type="RefSeq" id="WP_012411495.1">
    <property type="nucleotide sequence ID" value="NC_010628.1"/>
</dbReference>
<dbReference type="SMR" id="B2J393"/>
<dbReference type="STRING" id="63737.Npun_F5213"/>
<dbReference type="EnsemblBacteria" id="ACC83543">
    <property type="protein sequence ID" value="ACC83543"/>
    <property type="gene ID" value="Npun_F5213"/>
</dbReference>
<dbReference type="GeneID" id="57097959"/>
<dbReference type="KEGG" id="npu:Npun_F5213"/>
<dbReference type="eggNOG" id="COG1143">
    <property type="taxonomic scope" value="Bacteria"/>
</dbReference>
<dbReference type="HOGENOM" id="CLU_139698_8_0_3"/>
<dbReference type="OrthoDB" id="9804603at2"/>
<dbReference type="PhylomeDB" id="B2J393"/>
<dbReference type="Proteomes" id="UP000001191">
    <property type="component" value="Chromosome"/>
</dbReference>
<dbReference type="GO" id="GO:0009522">
    <property type="term" value="C:photosystem I"/>
    <property type="evidence" value="ECO:0007669"/>
    <property type="project" value="UniProtKB-KW"/>
</dbReference>
<dbReference type="GO" id="GO:0031676">
    <property type="term" value="C:plasma membrane-derived thylakoid membrane"/>
    <property type="evidence" value="ECO:0007669"/>
    <property type="project" value="UniProtKB-SubCell"/>
</dbReference>
<dbReference type="GO" id="GO:0051539">
    <property type="term" value="F:4 iron, 4 sulfur cluster binding"/>
    <property type="evidence" value="ECO:0007669"/>
    <property type="project" value="UniProtKB-KW"/>
</dbReference>
<dbReference type="GO" id="GO:0009055">
    <property type="term" value="F:electron transfer activity"/>
    <property type="evidence" value="ECO:0007669"/>
    <property type="project" value="UniProtKB-UniRule"/>
</dbReference>
<dbReference type="GO" id="GO:0046872">
    <property type="term" value="F:metal ion binding"/>
    <property type="evidence" value="ECO:0007669"/>
    <property type="project" value="UniProtKB-KW"/>
</dbReference>
<dbReference type="GO" id="GO:0016491">
    <property type="term" value="F:oxidoreductase activity"/>
    <property type="evidence" value="ECO:0007669"/>
    <property type="project" value="UniProtKB-KW"/>
</dbReference>
<dbReference type="GO" id="GO:0009773">
    <property type="term" value="P:photosynthetic electron transport in photosystem I"/>
    <property type="evidence" value="ECO:0007669"/>
    <property type="project" value="InterPro"/>
</dbReference>
<dbReference type="FunFam" id="3.30.70.20:FF:000001">
    <property type="entry name" value="Photosystem I iron-sulfur center"/>
    <property type="match status" value="1"/>
</dbReference>
<dbReference type="Gene3D" id="3.30.70.20">
    <property type="match status" value="1"/>
</dbReference>
<dbReference type="HAMAP" id="MF_01303">
    <property type="entry name" value="PSI_PsaC"/>
    <property type="match status" value="1"/>
</dbReference>
<dbReference type="InterPro" id="IPR017896">
    <property type="entry name" value="4Fe4S_Fe-S-bd"/>
</dbReference>
<dbReference type="InterPro" id="IPR017900">
    <property type="entry name" value="4Fe4S_Fe_S_CS"/>
</dbReference>
<dbReference type="InterPro" id="IPR050157">
    <property type="entry name" value="PSI_iron-sulfur_center"/>
</dbReference>
<dbReference type="InterPro" id="IPR017491">
    <property type="entry name" value="PSI_PsaC"/>
</dbReference>
<dbReference type="NCBIfam" id="TIGR03048">
    <property type="entry name" value="PS_I_psaC"/>
    <property type="match status" value="1"/>
</dbReference>
<dbReference type="PANTHER" id="PTHR24960:SF79">
    <property type="entry name" value="PHOTOSYSTEM I IRON-SULFUR CENTER"/>
    <property type="match status" value="1"/>
</dbReference>
<dbReference type="PANTHER" id="PTHR24960">
    <property type="entry name" value="PHOTOSYSTEM I IRON-SULFUR CENTER-RELATED"/>
    <property type="match status" value="1"/>
</dbReference>
<dbReference type="Pfam" id="PF12838">
    <property type="entry name" value="Fer4_7"/>
    <property type="match status" value="1"/>
</dbReference>
<dbReference type="SUPFAM" id="SSF54862">
    <property type="entry name" value="4Fe-4S ferredoxins"/>
    <property type="match status" value="1"/>
</dbReference>
<dbReference type="PROSITE" id="PS00198">
    <property type="entry name" value="4FE4S_FER_1"/>
    <property type="match status" value="2"/>
</dbReference>
<dbReference type="PROSITE" id="PS51379">
    <property type="entry name" value="4FE4S_FER_2"/>
    <property type="match status" value="2"/>
</dbReference>
<protein>
    <recommendedName>
        <fullName evidence="1">Photosystem I iron-sulfur center</fullName>
        <ecNumber evidence="1">1.97.1.12</ecNumber>
    </recommendedName>
    <alternativeName>
        <fullName evidence="1">9 kDa polypeptide</fullName>
    </alternativeName>
    <alternativeName>
        <fullName evidence="1">PSI-C</fullName>
    </alternativeName>
    <alternativeName>
        <fullName evidence="1">Photosystem I subunit VII</fullName>
    </alternativeName>
    <alternativeName>
        <fullName evidence="1">PsaC</fullName>
    </alternativeName>
</protein>
<name>PSAC_NOSP7</name>
<feature type="chain" id="PRO_1000140646" description="Photosystem I iron-sulfur center">
    <location>
        <begin position="1"/>
        <end position="81"/>
    </location>
</feature>
<feature type="domain" description="4Fe-4S ferredoxin-type 1" evidence="1">
    <location>
        <begin position="1"/>
        <end position="31"/>
    </location>
</feature>
<feature type="domain" description="4Fe-4S ferredoxin-type 2" evidence="1">
    <location>
        <begin position="39"/>
        <end position="68"/>
    </location>
</feature>
<feature type="binding site" evidence="1">
    <location>
        <position position="11"/>
    </location>
    <ligand>
        <name>[4Fe-4S] cluster</name>
        <dbReference type="ChEBI" id="CHEBI:49883"/>
        <label>1</label>
    </ligand>
</feature>
<feature type="binding site" evidence="1">
    <location>
        <position position="14"/>
    </location>
    <ligand>
        <name>[4Fe-4S] cluster</name>
        <dbReference type="ChEBI" id="CHEBI:49883"/>
        <label>1</label>
    </ligand>
</feature>
<feature type="binding site" evidence="1">
    <location>
        <position position="17"/>
    </location>
    <ligand>
        <name>[4Fe-4S] cluster</name>
        <dbReference type="ChEBI" id="CHEBI:49883"/>
        <label>1</label>
    </ligand>
</feature>
<feature type="binding site" evidence="1">
    <location>
        <position position="21"/>
    </location>
    <ligand>
        <name>[4Fe-4S] cluster</name>
        <dbReference type="ChEBI" id="CHEBI:49883"/>
        <label>2</label>
    </ligand>
</feature>
<feature type="binding site" evidence="1">
    <location>
        <position position="48"/>
    </location>
    <ligand>
        <name>[4Fe-4S] cluster</name>
        <dbReference type="ChEBI" id="CHEBI:49883"/>
        <label>2</label>
    </ligand>
</feature>
<feature type="binding site" evidence="1">
    <location>
        <position position="51"/>
    </location>
    <ligand>
        <name>[4Fe-4S] cluster</name>
        <dbReference type="ChEBI" id="CHEBI:49883"/>
        <label>2</label>
    </ligand>
</feature>
<feature type="binding site" evidence="1">
    <location>
        <position position="54"/>
    </location>
    <ligand>
        <name>[4Fe-4S] cluster</name>
        <dbReference type="ChEBI" id="CHEBI:49883"/>
        <label>2</label>
    </ligand>
</feature>
<feature type="binding site" evidence="1">
    <location>
        <position position="58"/>
    </location>
    <ligand>
        <name>[4Fe-4S] cluster</name>
        <dbReference type="ChEBI" id="CHEBI:49883"/>
        <label>1</label>
    </ligand>
</feature>
<sequence length="81" mass="8830">MSHTVKIYDTCIGCTQCVRACPTDVLEMVPWDGCKAAQIASSPRTEDCVGCKRCETACPTDFLSIRVYLGAETTRSMGLAY</sequence>
<keyword id="KW-0004">4Fe-4S</keyword>
<keyword id="KW-0249">Electron transport</keyword>
<keyword id="KW-0408">Iron</keyword>
<keyword id="KW-0411">Iron-sulfur</keyword>
<keyword id="KW-0472">Membrane</keyword>
<keyword id="KW-0479">Metal-binding</keyword>
<keyword id="KW-0560">Oxidoreductase</keyword>
<keyword id="KW-0602">Photosynthesis</keyword>
<keyword id="KW-0603">Photosystem I</keyword>
<keyword id="KW-1185">Reference proteome</keyword>
<keyword id="KW-0677">Repeat</keyword>
<keyword id="KW-0793">Thylakoid</keyword>
<keyword id="KW-0813">Transport</keyword>